<organism>
    <name type="scientific">Escherichia coli (strain ATCC 8739 / DSM 1576 / NBRC 3972 / NCIMB 8545 / WDCM 00012 / Crooks)</name>
    <dbReference type="NCBI Taxonomy" id="481805"/>
    <lineage>
        <taxon>Bacteria</taxon>
        <taxon>Pseudomonadati</taxon>
        <taxon>Pseudomonadota</taxon>
        <taxon>Gammaproteobacteria</taxon>
        <taxon>Enterobacterales</taxon>
        <taxon>Enterobacteriaceae</taxon>
        <taxon>Escherichia</taxon>
    </lineage>
</organism>
<comment type="function">
    <text evidence="2">One of the essential components for the initiation of protein synthesis. Protects formylmethionyl-tRNA from spontaneous hydrolysis and promotes its binding to the 30S ribosomal subunits. Also involved in the hydrolysis of GTP during the formation of the 70S ribosomal complex.</text>
</comment>
<comment type="subcellular location">
    <subcellularLocation>
        <location evidence="2">Cytoplasm</location>
    </subcellularLocation>
</comment>
<comment type="similarity">
    <text evidence="2">Belongs to the TRAFAC class translation factor GTPase superfamily. Classic translation factor GTPase family. IF-2 subfamily.</text>
</comment>
<reference key="1">
    <citation type="submission" date="2008-02" db="EMBL/GenBank/DDBJ databases">
        <title>Complete sequence of Escherichia coli C str. ATCC 8739.</title>
        <authorList>
            <person name="Copeland A."/>
            <person name="Lucas S."/>
            <person name="Lapidus A."/>
            <person name="Glavina del Rio T."/>
            <person name="Dalin E."/>
            <person name="Tice H."/>
            <person name="Bruce D."/>
            <person name="Goodwin L."/>
            <person name="Pitluck S."/>
            <person name="Kiss H."/>
            <person name="Brettin T."/>
            <person name="Detter J.C."/>
            <person name="Han C."/>
            <person name="Kuske C.R."/>
            <person name="Schmutz J."/>
            <person name="Larimer F."/>
            <person name="Land M."/>
            <person name="Hauser L."/>
            <person name="Kyrpides N."/>
            <person name="Mikhailova N."/>
            <person name="Ingram L."/>
            <person name="Richardson P."/>
        </authorList>
    </citation>
    <scope>NUCLEOTIDE SEQUENCE [LARGE SCALE GENOMIC DNA]</scope>
    <source>
        <strain>ATCC 8739 / DSM 1576 / NBRC 3972 / NCIMB 8545 / WDCM 00012 / Crooks</strain>
    </source>
</reference>
<accession>B1IQV3</accession>
<feature type="chain" id="PRO_1000075605" description="Translation initiation factor IF-2">
    <location>
        <begin position="1"/>
        <end position="890"/>
    </location>
</feature>
<feature type="domain" description="tr-type G">
    <location>
        <begin position="389"/>
        <end position="558"/>
    </location>
</feature>
<feature type="region of interest" description="Disordered" evidence="3">
    <location>
        <begin position="45"/>
        <end position="304"/>
    </location>
</feature>
<feature type="region of interest" description="G1" evidence="1">
    <location>
        <begin position="398"/>
        <end position="405"/>
    </location>
</feature>
<feature type="region of interest" description="G2" evidence="1">
    <location>
        <begin position="423"/>
        <end position="427"/>
    </location>
</feature>
<feature type="region of interest" description="G3" evidence="1">
    <location>
        <begin position="444"/>
        <end position="447"/>
    </location>
</feature>
<feature type="region of interest" description="G4" evidence="1">
    <location>
        <begin position="498"/>
        <end position="501"/>
    </location>
</feature>
<feature type="region of interest" description="G5" evidence="1">
    <location>
        <begin position="534"/>
        <end position="536"/>
    </location>
</feature>
<feature type="compositionally biased region" description="Polar residues" evidence="3">
    <location>
        <begin position="67"/>
        <end position="81"/>
    </location>
</feature>
<feature type="compositionally biased region" description="Basic and acidic residues" evidence="3">
    <location>
        <begin position="92"/>
        <end position="217"/>
    </location>
</feature>
<feature type="compositionally biased region" description="Basic residues" evidence="3">
    <location>
        <begin position="252"/>
        <end position="266"/>
    </location>
</feature>
<feature type="compositionally biased region" description="Basic and acidic residues" evidence="3">
    <location>
        <begin position="267"/>
        <end position="280"/>
    </location>
</feature>
<feature type="binding site" evidence="2">
    <location>
        <begin position="398"/>
        <end position="405"/>
    </location>
    <ligand>
        <name>GTP</name>
        <dbReference type="ChEBI" id="CHEBI:37565"/>
    </ligand>
</feature>
<feature type="binding site" evidence="2">
    <location>
        <begin position="444"/>
        <end position="448"/>
    </location>
    <ligand>
        <name>GTP</name>
        <dbReference type="ChEBI" id="CHEBI:37565"/>
    </ligand>
</feature>
<feature type="binding site" evidence="2">
    <location>
        <begin position="498"/>
        <end position="501"/>
    </location>
    <ligand>
        <name>GTP</name>
        <dbReference type="ChEBI" id="CHEBI:37565"/>
    </ligand>
</feature>
<feature type="modified residue" description="N6-acetyllysine" evidence="1">
    <location>
        <position position="808"/>
    </location>
</feature>
<keyword id="KW-0007">Acetylation</keyword>
<keyword id="KW-0963">Cytoplasm</keyword>
<keyword id="KW-0342">GTP-binding</keyword>
<keyword id="KW-0396">Initiation factor</keyword>
<keyword id="KW-0547">Nucleotide-binding</keyword>
<keyword id="KW-0648">Protein biosynthesis</keyword>
<gene>
    <name evidence="2" type="primary">infB</name>
    <name type="ordered locus">EcolC_0530</name>
</gene>
<name>IF2_ECOLC</name>
<evidence type="ECO:0000250" key="1"/>
<evidence type="ECO:0000255" key="2">
    <source>
        <dbReference type="HAMAP-Rule" id="MF_00100"/>
    </source>
</evidence>
<evidence type="ECO:0000256" key="3">
    <source>
        <dbReference type="SAM" id="MobiDB-lite"/>
    </source>
</evidence>
<sequence length="890" mass="97350">MTDVTIKTLAAERQTSVERLVQQFADAGIRKSADDSVSAQEKQTLIDHLNQKNSGPDKLTLQRKTRSTLNIPGTGGKSKSVQIEVRKKRTFVKRDPQEAERLAAEEQAQREAEEQARREAEESAKREAQQKAEREAAEQAKREAAEQAKREAAEKDKVSNQQDDMTKNAQAEKARREQEAAELKRKAEEEARRKLEEEARRVAEEARRMAEENKWTDNAEPTEDSSDYHVTTSQHARQAEDESDREVEGGRGRGRNAKAARPKKGNKHAESKADREEARAAVRGGKGGKRKGSSLQQGFQKPAQAVNRDVVIGETITVGELANKMAVKGSQVIKAMMKLGAMATINQVIDQETAQLVAEEMGHKVILRRENELEEAVMSDRDTGAAAEPRAPVVTIMGHVDHGKTSLLDYIRSTKVASGEAGGITQHIGAYHVETENGMITFLDTPGHAAFTSMRARGAQATDIVVLVVAADDGVMPQTIEAIQHAKAAQVPVVVAVNKIDKPEADPDRVKNELSQYGILPEEWGGESQFVHVSAKAGTGIDELLDAILLQAEVLELKAVRKGMASGAVIESFLDKGRGPVATVLVREGTLHKGDIVLCGFEYGRVRAMRNELGQEVLEAGPSIPVEILGLSGVPAAGDEVTVVRDEKKAREVALYRQGKFREVKLARQQKSKLENMFANMTEGEVHEVNIVLKADVQGSVEAISDSLLKLSTDEVKVKIIGSGVGGITETDATLAAASNAILVGFNVRADASARKVIEAESLDLRYYSVIYNLIDEVKAAMSGMLSPELKQQIIGLAEVRDVFKSPKFGAIAGCMVTEGVVKRHNPIRVLRDNVVIYEGELESLRRFKDDVNEVRNGMECGIGVKNYNDVRTGDVIEVFEIIEIQRTIA</sequence>
<dbReference type="EMBL" id="CP000946">
    <property type="protein sequence ID" value="ACA76207.1"/>
    <property type="molecule type" value="Genomic_DNA"/>
</dbReference>
<dbReference type="RefSeq" id="WP_000133044.1">
    <property type="nucleotide sequence ID" value="NZ_MTFT01000027.1"/>
</dbReference>
<dbReference type="BMRB" id="B1IQV3"/>
<dbReference type="SMR" id="B1IQV3"/>
<dbReference type="GeneID" id="75206024"/>
<dbReference type="KEGG" id="ecl:EcolC_0530"/>
<dbReference type="HOGENOM" id="CLU_006301_6_3_6"/>
<dbReference type="GO" id="GO:0005829">
    <property type="term" value="C:cytosol"/>
    <property type="evidence" value="ECO:0007669"/>
    <property type="project" value="TreeGrafter"/>
</dbReference>
<dbReference type="GO" id="GO:0005525">
    <property type="term" value="F:GTP binding"/>
    <property type="evidence" value="ECO:0007669"/>
    <property type="project" value="UniProtKB-KW"/>
</dbReference>
<dbReference type="GO" id="GO:0003924">
    <property type="term" value="F:GTPase activity"/>
    <property type="evidence" value="ECO:0007669"/>
    <property type="project" value="UniProtKB-UniRule"/>
</dbReference>
<dbReference type="GO" id="GO:0097216">
    <property type="term" value="F:guanosine tetraphosphate binding"/>
    <property type="evidence" value="ECO:0007669"/>
    <property type="project" value="UniProtKB-ARBA"/>
</dbReference>
<dbReference type="GO" id="GO:0003743">
    <property type="term" value="F:translation initiation factor activity"/>
    <property type="evidence" value="ECO:0007669"/>
    <property type="project" value="UniProtKB-UniRule"/>
</dbReference>
<dbReference type="CDD" id="cd01887">
    <property type="entry name" value="IF2_eIF5B"/>
    <property type="match status" value="1"/>
</dbReference>
<dbReference type="CDD" id="cd03702">
    <property type="entry name" value="IF2_mtIF2_II"/>
    <property type="match status" value="1"/>
</dbReference>
<dbReference type="CDD" id="cd03692">
    <property type="entry name" value="mtIF2_IVc"/>
    <property type="match status" value="1"/>
</dbReference>
<dbReference type="FunFam" id="2.40.30.10:FF:000007">
    <property type="entry name" value="Translation initiation factor IF-2"/>
    <property type="match status" value="1"/>
</dbReference>
<dbReference type="FunFam" id="2.40.30.10:FF:000008">
    <property type="entry name" value="Translation initiation factor IF-2"/>
    <property type="match status" value="1"/>
</dbReference>
<dbReference type="FunFam" id="3.30.56.50:FF:000001">
    <property type="entry name" value="Translation initiation factor IF-2"/>
    <property type="match status" value="1"/>
</dbReference>
<dbReference type="FunFam" id="3.40.50.10050:FF:000001">
    <property type="entry name" value="Translation initiation factor IF-2"/>
    <property type="match status" value="1"/>
</dbReference>
<dbReference type="FunFam" id="3.40.50.300:FF:000019">
    <property type="entry name" value="Translation initiation factor IF-2"/>
    <property type="match status" value="1"/>
</dbReference>
<dbReference type="Gene3D" id="3.40.50.300">
    <property type="entry name" value="P-loop containing nucleotide triphosphate hydrolases"/>
    <property type="match status" value="1"/>
</dbReference>
<dbReference type="Gene3D" id="3.30.56.50">
    <property type="entry name" value="Putative DNA-binding domain, N-terminal subdomain of bacterial translation initiation factor IF2"/>
    <property type="match status" value="1"/>
</dbReference>
<dbReference type="Gene3D" id="2.40.30.10">
    <property type="entry name" value="Translation factors"/>
    <property type="match status" value="2"/>
</dbReference>
<dbReference type="Gene3D" id="3.40.50.10050">
    <property type="entry name" value="Translation initiation factor IF- 2, domain 3"/>
    <property type="match status" value="1"/>
</dbReference>
<dbReference type="HAMAP" id="MF_00100_B">
    <property type="entry name" value="IF_2_B"/>
    <property type="match status" value="1"/>
</dbReference>
<dbReference type="InterPro" id="IPR009061">
    <property type="entry name" value="DNA-bd_dom_put_sf"/>
</dbReference>
<dbReference type="InterPro" id="IPR053905">
    <property type="entry name" value="EF-G-like_DII"/>
</dbReference>
<dbReference type="InterPro" id="IPR004161">
    <property type="entry name" value="EFTu-like_2"/>
</dbReference>
<dbReference type="InterPro" id="IPR013575">
    <property type="entry name" value="IF2_assoc_dom_bac"/>
</dbReference>
<dbReference type="InterPro" id="IPR044145">
    <property type="entry name" value="IF2_II"/>
</dbReference>
<dbReference type="InterPro" id="IPR006847">
    <property type="entry name" value="IF2_N"/>
</dbReference>
<dbReference type="InterPro" id="IPR027417">
    <property type="entry name" value="P-loop_NTPase"/>
</dbReference>
<dbReference type="InterPro" id="IPR005225">
    <property type="entry name" value="Small_GTP-bd"/>
</dbReference>
<dbReference type="InterPro" id="IPR000795">
    <property type="entry name" value="T_Tr_GTP-bd_dom"/>
</dbReference>
<dbReference type="InterPro" id="IPR000178">
    <property type="entry name" value="TF_IF2_bacterial-like"/>
</dbReference>
<dbReference type="InterPro" id="IPR015760">
    <property type="entry name" value="TIF_IF2"/>
</dbReference>
<dbReference type="InterPro" id="IPR023115">
    <property type="entry name" value="TIF_IF2_dom3"/>
</dbReference>
<dbReference type="InterPro" id="IPR036925">
    <property type="entry name" value="TIF_IF2_dom3_sf"/>
</dbReference>
<dbReference type="InterPro" id="IPR009000">
    <property type="entry name" value="Transl_B-barrel_sf"/>
</dbReference>
<dbReference type="NCBIfam" id="TIGR00487">
    <property type="entry name" value="IF-2"/>
    <property type="match status" value="1"/>
</dbReference>
<dbReference type="NCBIfam" id="TIGR00231">
    <property type="entry name" value="small_GTP"/>
    <property type="match status" value="1"/>
</dbReference>
<dbReference type="PANTHER" id="PTHR43381:SF5">
    <property type="entry name" value="TR-TYPE G DOMAIN-CONTAINING PROTEIN"/>
    <property type="match status" value="1"/>
</dbReference>
<dbReference type="PANTHER" id="PTHR43381">
    <property type="entry name" value="TRANSLATION INITIATION FACTOR IF-2-RELATED"/>
    <property type="match status" value="1"/>
</dbReference>
<dbReference type="Pfam" id="PF22042">
    <property type="entry name" value="EF-G_D2"/>
    <property type="match status" value="1"/>
</dbReference>
<dbReference type="Pfam" id="PF00009">
    <property type="entry name" value="GTP_EFTU"/>
    <property type="match status" value="1"/>
</dbReference>
<dbReference type="Pfam" id="PF03144">
    <property type="entry name" value="GTP_EFTU_D2"/>
    <property type="match status" value="1"/>
</dbReference>
<dbReference type="Pfam" id="PF11987">
    <property type="entry name" value="IF-2"/>
    <property type="match status" value="1"/>
</dbReference>
<dbReference type="Pfam" id="PF08364">
    <property type="entry name" value="IF2_assoc"/>
    <property type="match status" value="1"/>
</dbReference>
<dbReference type="Pfam" id="PF04760">
    <property type="entry name" value="IF2_N"/>
    <property type="match status" value="2"/>
</dbReference>
<dbReference type="SUPFAM" id="SSF52156">
    <property type="entry name" value="Initiation factor IF2/eIF5b, domain 3"/>
    <property type="match status" value="1"/>
</dbReference>
<dbReference type="SUPFAM" id="SSF52540">
    <property type="entry name" value="P-loop containing nucleoside triphosphate hydrolases"/>
    <property type="match status" value="1"/>
</dbReference>
<dbReference type="SUPFAM" id="SSF46955">
    <property type="entry name" value="Putative DNA-binding domain"/>
    <property type="match status" value="1"/>
</dbReference>
<dbReference type="SUPFAM" id="SSF50447">
    <property type="entry name" value="Translation proteins"/>
    <property type="match status" value="2"/>
</dbReference>
<dbReference type="PROSITE" id="PS51722">
    <property type="entry name" value="G_TR_2"/>
    <property type="match status" value="1"/>
</dbReference>
<dbReference type="PROSITE" id="PS01176">
    <property type="entry name" value="IF2"/>
    <property type="match status" value="1"/>
</dbReference>
<protein>
    <recommendedName>
        <fullName evidence="2">Translation initiation factor IF-2</fullName>
    </recommendedName>
</protein>
<proteinExistence type="inferred from homology"/>